<organism>
    <name type="scientific">Neurospora crassa (strain ATCC 24698 / 74-OR23-1A / CBS 708.71 / DSM 1257 / FGSC 987)</name>
    <dbReference type="NCBI Taxonomy" id="367110"/>
    <lineage>
        <taxon>Eukaryota</taxon>
        <taxon>Fungi</taxon>
        <taxon>Dikarya</taxon>
        <taxon>Ascomycota</taxon>
        <taxon>Pezizomycotina</taxon>
        <taxon>Sordariomycetes</taxon>
        <taxon>Sordariomycetidae</taxon>
        <taxon>Sordariales</taxon>
        <taxon>Sordariaceae</taxon>
        <taxon>Neurospora</taxon>
    </lineage>
</organism>
<comment type="subunit">
    <text>G proteins are composed of 3 units, alpha, beta and gamma.</text>
</comment>
<comment type="subcellular location">
    <subcellularLocation>
        <location evidence="1">Membrane</location>
        <topology evidence="1">Peripheral membrane protein</topology>
    </subcellularLocation>
</comment>
<comment type="similarity">
    <text evidence="3">Belongs to the G protein gamma family.</text>
</comment>
<reference key="1">
    <citation type="journal article" date="2005" name="Eukaryot. Cell">
        <title>The heterotrimeric G-protein subunits GNG-1 and GNB-1 form a Gbetagamma dimer required for normal female fertility, asexual development, and galpha protein levels in Neurospora crassa.</title>
        <authorList>
            <person name="Krystofova S."/>
            <person name="Borkovich K.A."/>
        </authorList>
    </citation>
    <scope>NUCLEOTIDE SEQUENCE [GENOMIC DNA]</scope>
</reference>
<reference key="2">
    <citation type="journal article" date="2003" name="Nature">
        <title>The genome sequence of the filamentous fungus Neurospora crassa.</title>
        <authorList>
            <person name="Galagan J.E."/>
            <person name="Calvo S.E."/>
            <person name="Borkovich K.A."/>
            <person name="Selker E.U."/>
            <person name="Read N.D."/>
            <person name="Jaffe D.B."/>
            <person name="FitzHugh W."/>
            <person name="Ma L.-J."/>
            <person name="Smirnov S."/>
            <person name="Purcell S."/>
            <person name="Rehman B."/>
            <person name="Elkins T."/>
            <person name="Engels R."/>
            <person name="Wang S."/>
            <person name="Nielsen C.B."/>
            <person name="Butler J."/>
            <person name="Endrizzi M."/>
            <person name="Qui D."/>
            <person name="Ianakiev P."/>
            <person name="Bell-Pedersen D."/>
            <person name="Nelson M.A."/>
            <person name="Werner-Washburne M."/>
            <person name="Selitrennikoff C.P."/>
            <person name="Kinsey J.A."/>
            <person name="Braun E.L."/>
            <person name="Zelter A."/>
            <person name="Schulte U."/>
            <person name="Kothe G.O."/>
            <person name="Jedd G."/>
            <person name="Mewes H.-W."/>
            <person name="Staben C."/>
            <person name="Marcotte E."/>
            <person name="Greenberg D."/>
            <person name="Roy A."/>
            <person name="Foley K."/>
            <person name="Naylor J."/>
            <person name="Stange-Thomann N."/>
            <person name="Barrett R."/>
            <person name="Gnerre S."/>
            <person name="Kamal M."/>
            <person name="Kamvysselis M."/>
            <person name="Mauceli E.W."/>
            <person name="Bielke C."/>
            <person name="Rudd S."/>
            <person name="Frishman D."/>
            <person name="Krystofova S."/>
            <person name="Rasmussen C."/>
            <person name="Metzenberg R.L."/>
            <person name="Perkins D.D."/>
            <person name="Kroken S."/>
            <person name="Cogoni C."/>
            <person name="Macino G."/>
            <person name="Catcheside D.E.A."/>
            <person name="Li W."/>
            <person name="Pratt R.J."/>
            <person name="Osmani S.A."/>
            <person name="DeSouza C.P.C."/>
            <person name="Glass N.L."/>
            <person name="Orbach M.J."/>
            <person name="Berglund J.A."/>
            <person name="Voelker R."/>
            <person name="Yarden O."/>
            <person name="Plamann M."/>
            <person name="Seiler S."/>
            <person name="Dunlap J.C."/>
            <person name="Radford A."/>
            <person name="Aramayo R."/>
            <person name="Natvig D.O."/>
            <person name="Alex L.A."/>
            <person name="Mannhaupt G."/>
            <person name="Ebbole D.J."/>
            <person name="Freitag M."/>
            <person name="Paulsen I."/>
            <person name="Sachs M.S."/>
            <person name="Lander E.S."/>
            <person name="Nusbaum C."/>
            <person name="Birren B.W."/>
        </authorList>
    </citation>
    <scope>NUCLEOTIDE SEQUENCE [LARGE SCALE GENOMIC DNA]</scope>
    <source>
        <strain>ATCC 24698 / 74-OR23-1A / CBS 708.71 / DSM 1257 / FGSC 987</strain>
    </source>
</reference>
<gene>
    <name type="primary">gng-1</name>
    <name type="ORF">NCU00041</name>
</gene>
<sequence>MPQYASRDVGDPSQIKKNKQSMADLKLRRLTELNNRLREDLERERIPVSQAAKSIITYCNSTRDYMVPSVWGPVPKSEDPYLPQQSSGCCVVM</sequence>
<keyword id="KW-0449">Lipoprotein</keyword>
<keyword id="KW-0472">Membrane</keyword>
<keyword id="KW-0488">Methylation</keyword>
<keyword id="KW-0564">Palmitate</keyword>
<keyword id="KW-0636">Prenylation</keyword>
<keyword id="KW-1185">Reference proteome</keyword>
<keyword id="KW-0807">Transducer</keyword>
<feature type="chain" id="PRO_0000194809" description="Guanine nucleotide-binding protein subunit gamma">
    <location>
        <begin position="1"/>
        <end position="90"/>
    </location>
</feature>
<feature type="propeptide" id="PRO_0000396772" description="Removed in mature form" evidence="1">
    <location>
        <begin position="91"/>
        <end position="93"/>
    </location>
</feature>
<feature type="region of interest" description="Disordered" evidence="2">
    <location>
        <begin position="1"/>
        <end position="22"/>
    </location>
</feature>
<feature type="modified residue" description="Cysteine methyl ester" evidence="1">
    <location>
        <position position="90"/>
    </location>
</feature>
<feature type="lipid moiety-binding region" description="S-palmitoyl cysteine" evidence="1">
    <location>
        <position position="89"/>
    </location>
</feature>
<feature type="lipid moiety-binding region" description="S-farnesyl cysteine" evidence="1">
    <location>
        <position position="90"/>
    </location>
</feature>
<accession>Q7RWT0</accession>
<accession>Q5PXG1</accession>
<dbReference type="EMBL" id="AY823297">
    <property type="protein sequence ID" value="AAV83542.1"/>
    <property type="molecule type" value="mRNA"/>
</dbReference>
<dbReference type="EMBL" id="CM002238">
    <property type="protein sequence ID" value="EAA26916.2"/>
    <property type="molecule type" value="Genomic_DNA"/>
</dbReference>
<dbReference type="RefSeq" id="XP_956152.2">
    <property type="nucleotide sequence ID" value="XM_951059.3"/>
</dbReference>
<dbReference type="SMR" id="Q7RWT0"/>
<dbReference type="FunCoup" id="Q7RWT0">
    <property type="interactions" value="56"/>
</dbReference>
<dbReference type="STRING" id="367110.Q7RWT0"/>
<dbReference type="PaxDb" id="5141-EFNCRP00000000474"/>
<dbReference type="EnsemblFungi" id="EAA26916">
    <property type="protein sequence ID" value="EAA26916"/>
    <property type="gene ID" value="NCU00041"/>
</dbReference>
<dbReference type="GeneID" id="3872304"/>
<dbReference type="KEGG" id="ncr:NCU00041"/>
<dbReference type="VEuPathDB" id="FungiDB:NCU00041"/>
<dbReference type="HOGENOM" id="CLU_163540_1_1_1"/>
<dbReference type="InParanoid" id="Q7RWT0"/>
<dbReference type="OrthoDB" id="19232at2759"/>
<dbReference type="Proteomes" id="UP000001805">
    <property type="component" value="Chromosome 3, Linkage Group III"/>
</dbReference>
<dbReference type="GO" id="GO:0005834">
    <property type="term" value="C:heterotrimeric G-protein complex"/>
    <property type="evidence" value="ECO:0000318"/>
    <property type="project" value="GO_Central"/>
</dbReference>
<dbReference type="GO" id="GO:0031681">
    <property type="term" value="F:G-protein beta-subunit binding"/>
    <property type="evidence" value="ECO:0007669"/>
    <property type="project" value="InterPro"/>
</dbReference>
<dbReference type="GO" id="GO:0007186">
    <property type="term" value="P:G protein-coupled receptor signaling pathway"/>
    <property type="evidence" value="ECO:0000318"/>
    <property type="project" value="GO_Central"/>
</dbReference>
<dbReference type="GO" id="GO:0000750">
    <property type="term" value="P:pheromone-dependent signal transduction involved in conjugation with cellular fusion"/>
    <property type="evidence" value="ECO:0007669"/>
    <property type="project" value="InterPro"/>
</dbReference>
<dbReference type="FunFam" id="4.10.260.10:FF:000003">
    <property type="entry name" value="G-protein complex gamma subunit Ste18/GpgA"/>
    <property type="match status" value="1"/>
</dbReference>
<dbReference type="Gene3D" id="4.10.260.10">
    <property type="entry name" value="Transducin (heterotrimeric G protein), gamma chain"/>
    <property type="match status" value="1"/>
</dbReference>
<dbReference type="InterPro" id="IPR015898">
    <property type="entry name" value="G-protein_gamma-like_dom"/>
</dbReference>
<dbReference type="InterPro" id="IPR036284">
    <property type="entry name" value="GGL_sf"/>
</dbReference>
<dbReference type="InterPro" id="IPR041848">
    <property type="entry name" value="Ste18_fungal"/>
</dbReference>
<dbReference type="PANTHER" id="PTHR28189">
    <property type="entry name" value="GUANINE NUCLEOTIDE-BINDING PROTEIN SUBUNIT GAMMA"/>
    <property type="match status" value="1"/>
</dbReference>
<dbReference type="PANTHER" id="PTHR28189:SF1">
    <property type="entry name" value="GUANINE NUCLEOTIDE-BINDING PROTEIN SUBUNIT GAMMA"/>
    <property type="match status" value="1"/>
</dbReference>
<dbReference type="Pfam" id="PF00631">
    <property type="entry name" value="G-gamma"/>
    <property type="match status" value="1"/>
</dbReference>
<dbReference type="SMART" id="SM01224">
    <property type="entry name" value="G_gamma"/>
    <property type="match status" value="1"/>
</dbReference>
<dbReference type="SMART" id="SM00224">
    <property type="entry name" value="GGL"/>
    <property type="match status" value="1"/>
</dbReference>
<dbReference type="SUPFAM" id="SSF48670">
    <property type="entry name" value="Transducin (heterotrimeric G protein), gamma chain"/>
    <property type="match status" value="1"/>
</dbReference>
<dbReference type="PROSITE" id="PS50058">
    <property type="entry name" value="G_PROTEIN_GAMMA"/>
    <property type="match status" value="1"/>
</dbReference>
<name>GBG_NEUCR</name>
<evidence type="ECO:0000250" key="1"/>
<evidence type="ECO:0000256" key="2">
    <source>
        <dbReference type="SAM" id="MobiDB-lite"/>
    </source>
</evidence>
<evidence type="ECO:0000305" key="3"/>
<proteinExistence type="inferred from homology"/>
<protein>
    <recommendedName>
        <fullName>Guanine nucleotide-binding protein subunit gamma</fullName>
    </recommendedName>
</protein>